<keyword id="KW-0004">4Fe-4S</keyword>
<keyword id="KW-0408">Iron</keyword>
<keyword id="KW-0411">Iron-sulfur</keyword>
<keyword id="KW-0414">Isoprene biosynthesis</keyword>
<keyword id="KW-0479">Metal-binding</keyword>
<keyword id="KW-0560">Oxidoreductase</keyword>
<keyword id="KW-1185">Reference proteome</keyword>
<name>ISPG_SHIFL</name>
<feature type="chain" id="PRO_0000190631" description="4-hydroxy-3-methylbut-2-en-1-yl diphosphate synthase (flavodoxin)">
    <location>
        <begin position="1"/>
        <end position="375"/>
    </location>
</feature>
<feature type="binding site" evidence="1">
    <location>
        <position position="270"/>
    </location>
    <ligand>
        <name>[4Fe-4S] cluster</name>
        <dbReference type="ChEBI" id="CHEBI:49883"/>
    </ligand>
</feature>
<feature type="binding site" evidence="1">
    <location>
        <position position="273"/>
    </location>
    <ligand>
        <name>[4Fe-4S] cluster</name>
        <dbReference type="ChEBI" id="CHEBI:49883"/>
    </ligand>
</feature>
<feature type="binding site" evidence="1">
    <location>
        <position position="305"/>
    </location>
    <ligand>
        <name>[4Fe-4S] cluster</name>
        <dbReference type="ChEBI" id="CHEBI:49883"/>
    </ligand>
</feature>
<feature type="binding site" evidence="1">
    <location>
        <position position="312"/>
    </location>
    <ligand>
        <name>[4Fe-4S] cluster</name>
        <dbReference type="ChEBI" id="CHEBI:49883"/>
    </ligand>
</feature>
<dbReference type="EC" id="1.17.7.3" evidence="1"/>
<dbReference type="EMBL" id="AE005674">
    <property type="protein sequence ID" value="AAN44061.1"/>
    <property type="molecule type" value="Genomic_DNA"/>
</dbReference>
<dbReference type="EMBL" id="AE014073">
    <property type="protein sequence ID" value="AAP17888.1"/>
    <property type="molecule type" value="Genomic_DNA"/>
</dbReference>
<dbReference type="RefSeq" id="NP_708354.1">
    <property type="nucleotide sequence ID" value="NC_004337.2"/>
</dbReference>
<dbReference type="RefSeq" id="WP_000551819.1">
    <property type="nucleotide sequence ID" value="NZ_WPGW01000078.1"/>
</dbReference>
<dbReference type="SMR" id="Q83K43"/>
<dbReference type="STRING" id="198214.SF2561"/>
<dbReference type="PaxDb" id="198214-SF2561"/>
<dbReference type="GeneID" id="1025629"/>
<dbReference type="KEGG" id="sfl:SF2561"/>
<dbReference type="KEGG" id="sfx:S2733"/>
<dbReference type="PATRIC" id="fig|198214.7.peg.3059"/>
<dbReference type="HOGENOM" id="CLU_042258_0_0_6"/>
<dbReference type="UniPathway" id="UPA00056">
    <property type="reaction ID" value="UER00096"/>
</dbReference>
<dbReference type="Proteomes" id="UP000001006">
    <property type="component" value="Chromosome"/>
</dbReference>
<dbReference type="Proteomes" id="UP000002673">
    <property type="component" value="Chromosome"/>
</dbReference>
<dbReference type="GO" id="GO:0051539">
    <property type="term" value="F:4 iron, 4 sulfur cluster binding"/>
    <property type="evidence" value="ECO:0007669"/>
    <property type="project" value="UniProtKB-UniRule"/>
</dbReference>
<dbReference type="GO" id="GO:0046429">
    <property type="term" value="F:4-hydroxy-3-methylbut-2-en-1-yl diphosphate synthase activity (ferredoxin)"/>
    <property type="evidence" value="ECO:0007669"/>
    <property type="project" value="UniProtKB-UniRule"/>
</dbReference>
<dbReference type="GO" id="GO:0141197">
    <property type="term" value="F:4-hydroxy-3-methylbut-2-enyl-diphosphate synthase activity (flavodoxin)"/>
    <property type="evidence" value="ECO:0007669"/>
    <property type="project" value="UniProtKB-EC"/>
</dbReference>
<dbReference type="GO" id="GO:0005506">
    <property type="term" value="F:iron ion binding"/>
    <property type="evidence" value="ECO:0007669"/>
    <property type="project" value="InterPro"/>
</dbReference>
<dbReference type="GO" id="GO:0019288">
    <property type="term" value="P:isopentenyl diphosphate biosynthetic process, methylerythritol 4-phosphate pathway"/>
    <property type="evidence" value="ECO:0007669"/>
    <property type="project" value="UniProtKB-UniRule"/>
</dbReference>
<dbReference type="GO" id="GO:0016114">
    <property type="term" value="P:terpenoid biosynthetic process"/>
    <property type="evidence" value="ECO:0007669"/>
    <property type="project" value="InterPro"/>
</dbReference>
<dbReference type="FunFam" id="3.20.20.20:FF:000001">
    <property type="entry name" value="4-hydroxy-3-methylbut-2-en-1-yl diphosphate synthase (flavodoxin)"/>
    <property type="match status" value="1"/>
</dbReference>
<dbReference type="FunFam" id="3.30.413.10:FF:000002">
    <property type="entry name" value="4-hydroxy-3-methylbut-2-en-1-yl diphosphate synthase (flavodoxin)"/>
    <property type="match status" value="1"/>
</dbReference>
<dbReference type="Gene3D" id="3.20.20.20">
    <property type="entry name" value="Dihydropteroate synthase-like"/>
    <property type="match status" value="1"/>
</dbReference>
<dbReference type="Gene3D" id="3.30.413.10">
    <property type="entry name" value="Sulfite Reductase Hemoprotein, domain 1"/>
    <property type="match status" value="1"/>
</dbReference>
<dbReference type="HAMAP" id="MF_00159">
    <property type="entry name" value="IspG"/>
    <property type="match status" value="1"/>
</dbReference>
<dbReference type="InterPro" id="IPR011005">
    <property type="entry name" value="Dihydropteroate_synth-like_sf"/>
</dbReference>
<dbReference type="InterPro" id="IPR016425">
    <property type="entry name" value="IspG_bac"/>
</dbReference>
<dbReference type="InterPro" id="IPR004588">
    <property type="entry name" value="IspG_bac-typ"/>
</dbReference>
<dbReference type="InterPro" id="IPR045854">
    <property type="entry name" value="NO2/SO3_Rdtase_4Fe4S_sf"/>
</dbReference>
<dbReference type="NCBIfam" id="TIGR00612">
    <property type="entry name" value="ispG_gcpE"/>
    <property type="match status" value="1"/>
</dbReference>
<dbReference type="NCBIfam" id="NF001540">
    <property type="entry name" value="PRK00366.1"/>
    <property type="match status" value="1"/>
</dbReference>
<dbReference type="PANTHER" id="PTHR30454">
    <property type="entry name" value="4-HYDROXY-3-METHYLBUT-2-EN-1-YL DIPHOSPHATE SYNTHASE"/>
    <property type="match status" value="1"/>
</dbReference>
<dbReference type="PANTHER" id="PTHR30454:SF0">
    <property type="entry name" value="4-HYDROXY-3-METHYLBUT-2-EN-1-YL DIPHOSPHATE SYNTHASE (FERREDOXIN), CHLOROPLASTIC"/>
    <property type="match status" value="1"/>
</dbReference>
<dbReference type="Pfam" id="PF04551">
    <property type="entry name" value="GcpE"/>
    <property type="match status" value="1"/>
</dbReference>
<dbReference type="PIRSF" id="PIRSF004640">
    <property type="entry name" value="IspG"/>
    <property type="match status" value="1"/>
</dbReference>
<dbReference type="SUPFAM" id="SSF51717">
    <property type="entry name" value="Dihydropteroate synthetase-like"/>
    <property type="match status" value="1"/>
</dbReference>
<dbReference type="SUPFAM" id="SSF56014">
    <property type="entry name" value="Nitrite and sulphite reductase 4Fe-4S domain-like"/>
    <property type="match status" value="1"/>
</dbReference>
<evidence type="ECO:0000255" key="1">
    <source>
        <dbReference type="HAMAP-Rule" id="MF_00159"/>
    </source>
</evidence>
<protein>
    <recommendedName>
        <fullName evidence="1">4-hydroxy-3-methylbut-2-en-1-yl diphosphate synthase (flavodoxin)</fullName>
        <ecNumber evidence="1">1.17.7.3</ecNumber>
    </recommendedName>
    <alternativeName>
        <fullName evidence="1">1-hydroxy-2-methyl-2-(E)-butenyl 4-diphosphate synthase</fullName>
    </alternativeName>
</protein>
<comment type="function">
    <text evidence="1">Converts 2C-methyl-D-erythritol 2,4-cyclodiphosphate (ME-2,4cPP) into 1-hydroxy-2-methyl-2-(E)-butenyl 4-diphosphate.</text>
</comment>
<comment type="catalytic activity">
    <reaction evidence="1">
        <text>(2E)-4-hydroxy-3-methylbut-2-enyl diphosphate + oxidized [flavodoxin] + H2O + 2 H(+) = 2-C-methyl-D-erythritol 2,4-cyclic diphosphate + reduced [flavodoxin]</text>
        <dbReference type="Rhea" id="RHEA:43604"/>
        <dbReference type="Rhea" id="RHEA-COMP:10622"/>
        <dbReference type="Rhea" id="RHEA-COMP:10623"/>
        <dbReference type="ChEBI" id="CHEBI:15377"/>
        <dbReference type="ChEBI" id="CHEBI:15378"/>
        <dbReference type="ChEBI" id="CHEBI:57618"/>
        <dbReference type="ChEBI" id="CHEBI:58210"/>
        <dbReference type="ChEBI" id="CHEBI:58483"/>
        <dbReference type="ChEBI" id="CHEBI:128753"/>
        <dbReference type="EC" id="1.17.7.3"/>
    </reaction>
</comment>
<comment type="cofactor">
    <cofactor evidence="1">
        <name>[4Fe-4S] cluster</name>
        <dbReference type="ChEBI" id="CHEBI:49883"/>
    </cofactor>
    <text evidence="1">Binds 1 [4Fe-4S] cluster.</text>
</comment>
<comment type="pathway">
    <text evidence="1">Isoprenoid biosynthesis; isopentenyl diphosphate biosynthesis via DXP pathway; isopentenyl diphosphate from 1-deoxy-D-xylulose 5-phosphate: step 5/6.</text>
</comment>
<comment type="similarity">
    <text evidence="1">Belongs to the IspG family.</text>
</comment>
<accession>Q83K43</accession>
<accession>Q7C0H0</accession>
<organism>
    <name type="scientific">Shigella flexneri</name>
    <dbReference type="NCBI Taxonomy" id="623"/>
    <lineage>
        <taxon>Bacteria</taxon>
        <taxon>Pseudomonadati</taxon>
        <taxon>Pseudomonadota</taxon>
        <taxon>Gammaproteobacteria</taxon>
        <taxon>Enterobacterales</taxon>
        <taxon>Enterobacteriaceae</taxon>
        <taxon>Shigella</taxon>
    </lineage>
</organism>
<gene>
    <name evidence="1" type="primary">ispG</name>
    <name type="synonym">gcpE</name>
    <name type="ordered locus">SF2561</name>
    <name type="ordered locus">S2733</name>
</gene>
<proteinExistence type="inferred from homology"/>
<sequence>MHNQAPIQRRKSTRIYVGNVPIGDGAPIAVQSMTNTRTTDVEATVNQIKALERVGADIVRVSVPTMDAAEAFKLIKQRVNVPLVADIHFDYRIALKVAEYGVDCLRINPGNIGNEERIRMVVDCARDKNIPIRIGVNAGSLEKDLQEKYGEPTPQALLESAMRHVDHLDRLNFDQFKVSVKASDVFLAVESYRLLAKQIDQPLHLGITEAGGARSGAVKSAIGLGLLLSEGIGDTLRVSLAADPVEEIKVGFDILKSLRIRSRGINFIACPTCSRQEFDVIGTVNALEQRLEDIITPMDVSIIGCVVNGPGEALVSTLGVTGGNKKSGLYEDGVRKDRLDNNDMIDQLEARIRAKASQLDEARRIDVQQVGKIIT</sequence>
<reference key="1">
    <citation type="journal article" date="2002" name="Nucleic Acids Res.">
        <title>Genome sequence of Shigella flexneri 2a: insights into pathogenicity through comparison with genomes of Escherichia coli K12 and O157.</title>
        <authorList>
            <person name="Jin Q."/>
            <person name="Yuan Z."/>
            <person name="Xu J."/>
            <person name="Wang Y."/>
            <person name="Shen Y."/>
            <person name="Lu W."/>
            <person name="Wang J."/>
            <person name="Liu H."/>
            <person name="Yang J."/>
            <person name="Yang F."/>
            <person name="Zhang X."/>
            <person name="Zhang J."/>
            <person name="Yang G."/>
            <person name="Wu H."/>
            <person name="Qu D."/>
            <person name="Dong J."/>
            <person name="Sun L."/>
            <person name="Xue Y."/>
            <person name="Zhao A."/>
            <person name="Gao Y."/>
            <person name="Zhu J."/>
            <person name="Kan B."/>
            <person name="Ding K."/>
            <person name="Chen S."/>
            <person name="Cheng H."/>
            <person name="Yao Z."/>
            <person name="He B."/>
            <person name="Chen R."/>
            <person name="Ma D."/>
            <person name="Qiang B."/>
            <person name="Wen Y."/>
            <person name="Hou Y."/>
            <person name="Yu J."/>
        </authorList>
    </citation>
    <scope>NUCLEOTIDE SEQUENCE [LARGE SCALE GENOMIC DNA]</scope>
    <source>
        <strain>301 / Serotype 2a</strain>
    </source>
</reference>
<reference key="2">
    <citation type="journal article" date="2003" name="Infect. Immun.">
        <title>Complete genome sequence and comparative genomics of Shigella flexneri serotype 2a strain 2457T.</title>
        <authorList>
            <person name="Wei J."/>
            <person name="Goldberg M.B."/>
            <person name="Burland V."/>
            <person name="Venkatesan M.M."/>
            <person name="Deng W."/>
            <person name="Fournier G."/>
            <person name="Mayhew G.F."/>
            <person name="Plunkett G. III"/>
            <person name="Rose D.J."/>
            <person name="Darling A."/>
            <person name="Mau B."/>
            <person name="Perna N.T."/>
            <person name="Payne S.M."/>
            <person name="Runyen-Janecky L.J."/>
            <person name="Zhou S."/>
            <person name="Schwartz D.C."/>
            <person name="Blattner F.R."/>
        </authorList>
    </citation>
    <scope>NUCLEOTIDE SEQUENCE [LARGE SCALE GENOMIC DNA]</scope>
    <source>
        <strain>ATCC 700930 / 2457T / Serotype 2a</strain>
    </source>
</reference>